<organism>
    <name type="scientific">Brucella melitensis biotype 2 (strain ATCC 23457)</name>
    <dbReference type="NCBI Taxonomy" id="546272"/>
    <lineage>
        <taxon>Bacteria</taxon>
        <taxon>Pseudomonadati</taxon>
        <taxon>Pseudomonadota</taxon>
        <taxon>Alphaproteobacteria</taxon>
        <taxon>Hyphomicrobiales</taxon>
        <taxon>Brucellaceae</taxon>
        <taxon>Brucella/Ochrobactrum group</taxon>
        <taxon>Brucella</taxon>
    </lineage>
</organism>
<name>GPDA_BRUMB</name>
<sequence length="326" mass="33377">MSTKIAVLGGGAWGTALAAMAAKGGHESWLYARDAETVVAINKDRRNPRYLGDITLADGIRASTDAAAVVTGADAVLAVIPAQAMRNGLSELGTLIPQASPIVLCAKGIEQNTGRLMSEVVAEILPDHRIAALSGPSFASDVARGLPTAVTVACEDANTADRLAALLSGPAFRCYSTTDLKGVETGGALKNVLAIAAGAAIGRGYGASAQAALVTRGFAELRRIGQAMSARPETIMGLSGLGDLMLTCSSSQSRNYSYGLALGRGEDLTSRPLAEGVATAPIAAELCRKHNISAPIIDAVGALLDGKITIDEAVTALLNRPLKTED</sequence>
<comment type="function">
    <text evidence="1">Catalyzes the reduction of the glycolytic intermediate dihydroxyacetone phosphate (DHAP) to sn-glycerol 3-phosphate (G3P), the key precursor for phospholipid synthesis.</text>
</comment>
<comment type="catalytic activity">
    <reaction evidence="1">
        <text>sn-glycerol 3-phosphate + NAD(+) = dihydroxyacetone phosphate + NADH + H(+)</text>
        <dbReference type="Rhea" id="RHEA:11092"/>
        <dbReference type="ChEBI" id="CHEBI:15378"/>
        <dbReference type="ChEBI" id="CHEBI:57540"/>
        <dbReference type="ChEBI" id="CHEBI:57597"/>
        <dbReference type="ChEBI" id="CHEBI:57642"/>
        <dbReference type="ChEBI" id="CHEBI:57945"/>
        <dbReference type="EC" id="1.1.1.94"/>
    </reaction>
    <physiologicalReaction direction="right-to-left" evidence="1">
        <dbReference type="Rhea" id="RHEA:11094"/>
    </physiologicalReaction>
</comment>
<comment type="catalytic activity">
    <reaction evidence="1">
        <text>sn-glycerol 3-phosphate + NADP(+) = dihydroxyacetone phosphate + NADPH + H(+)</text>
        <dbReference type="Rhea" id="RHEA:11096"/>
        <dbReference type="ChEBI" id="CHEBI:15378"/>
        <dbReference type="ChEBI" id="CHEBI:57597"/>
        <dbReference type="ChEBI" id="CHEBI:57642"/>
        <dbReference type="ChEBI" id="CHEBI:57783"/>
        <dbReference type="ChEBI" id="CHEBI:58349"/>
        <dbReference type="EC" id="1.1.1.94"/>
    </reaction>
    <physiologicalReaction direction="right-to-left" evidence="1">
        <dbReference type="Rhea" id="RHEA:11098"/>
    </physiologicalReaction>
</comment>
<comment type="pathway">
    <text evidence="1">Membrane lipid metabolism; glycerophospholipid metabolism.</text>
</comment>
<comment type="subcellular location">
    <subcellularLocation>
        <location evidence="1">Cytoplasm</location>
    </subcellularLocation>
</comment>
<comment type="similarity">
    <text evidence="1">Belongs to the NAD-dependent glycerol-3-phosphate dehydrogenase family.</text>
</comment>
<reference key="1">
    <citation type="submission" date="2009-03" db="EMBL/GenBank/DDBJ databases">
        <title>Brucella melitensis ATCC 23457 whole genome shotgun sequencing project.</title>
        <authorList>
            <person name="Setubal J.C."/>
            <person name="Boyle S."/>
            <person name="Crasta O.R."/>
            <person name="Gillespie J.J."/>
            <person name="Kenyon R.W."/>
            <person name="Lu J."/>
            <person name="Mane S."/>
            <person name="Nagrani S."/>
            <person name="Shallom J.M."/>
            <person name="Shallom S."/>
            <person name="Shukla M."/>
            <person name="Snyder E.E."/>
            <person name="Sobral B.W."/>
            <person name="Wattam A.R."/>
            <person name="Will R."/>
            <person name="Williams K."/>
            <person name="Yoo H."/>
            <person name="Munk C."/>
            <person name="Tapia R."/>
            <person name="Han C."/>
            <person name="Detter J.C."/>
            <person name="Bruce D."/>
            <person name="Brettin T.S."/>
        </authorList>
    </citation>
    <scope>NUCLEOTIDE SEQUENCE [LARGE SCALE GENOMIC DNA]</scope>
    <source>
        <strain>ATCC 23457</strain>
    </source>
</reference>
<gene>
    <name evidence="1" type="primary">gpsA</name>
    <name type="ordered locus">BMEA_A1942</name>
</gene>
<evidence type="ECO:0000255" key="1">
    <source>
        <dbReference type="HAMAP-Rule" id="MF_00394"/>
    </source>
</evidence>
<dbReference type="EC" id="1.1.1.94" evidence="1"/>
<dbReference type="EMBL" id="CP001488">
    <property type="protein sequence ID" value="ACO01605.1"/>
    <property type="molecule type" value="Genomic_DNA"/>
</dbReference>
<dbReference type="RefSeq" id="WP_002964959.1">
    <property type="nucleotide sequence ID" value="NC_012441.1"/>
</dbReference>
<dbReference type="SMR" id="C0RFD3"/>
<dbReference type="KEGG" id="bmi:BMEA_A1942"/>
<dbReference type="HOGENOM" id="CLU_033449_0_2_5"/>
<dbReference type="UniPathway" id="UPA00940"/>
<dbReference type="Proteomes" id="UP000001748">
    <property type="component" value="Chromosome I"/>
</dbReference>
<dbReference type="GO" id="GO:0005829">
    <property type="term" value="C:cytosol"/>
    <property type="evidence" value="ECO:0007669"/>
    <property type="project" value="TreeGrafter"/>
</dbReference>
<dbReference type="GO" id="GO:0047952">
    <property type="term" value="F:glycerol-3-phosphate dehydrogenase [NAD(P)+] activity"/>
    <property type="evidence" value="ECO:0007669"/>
    <property type="project" value="UniProtKB-UniRule"/>
</dbReference>
<dbReference type="GO" id="GO:0051287">
    <property type="term" value="F:NAD binding"/>
    <property type="evidence" value="ECO:0007669"/>
    <property type="project" value="InterPro"/>
</dbReference>
<dbReference type="GO" id="GO:0005975">
    <property type="term" value="P:carbohydrate metabolic process"/>
    <property type="evidence" value="ECO:0007669"/>
    <property type="project" value="InterPro"/>
</dbReference>
<dbReference type="GO" id="GO:0046167">
    <property type="term" value="P:glycerol-3-phosphate biosynthetic process"/>
    <property type="evidence" value="ECO:0007669"/>
    <property type="project" value="UniProtKB-UniRule"/>
</dbReference>
<dbReference type="GO" id="GO:0046168">
    <property type="term" value="P:glycerol-3-phosphate catabolic process"/>
    <property type="evidence" value="ECO:0007669"/>
    <property type="project" value="InterPro"/>
</dbReference>
<dbReference type="GO" id="GO:0006650">
    <property type="term" value="P:glycerophospholipid metabolic process"/>
    <property type="evidence" value="ECO:0007669"/>
    <property type="project" value="UniProtKB-UniRule"/>
</dbReference>
<dbReference type="GO" id="GO:0008654">
    <property type="term" value="P:phospholipid biosynthetic process"/>
    <property type="evidence" value="ECO:0007669"/>
    <property type="project" value="UniProtKB-KW"/>
</dbReference>
<dbReference type="FunFam" id="3.40.50.720:FF:000019">
    <property type="entry name" value="Glycerol-3-phosphate dehydrogenase [NAD(P)+]"/>
    <property type="match status" value="1"/>
</dbReference>
<dbReference type="Gene3D" id="1.10.1040.10">
    <property type="entry name" value="N-(1-d-carboxylethyl)-l-norvaline Dehydrogenase, domain 2"/>
    <property type="match status" value="1"/>
</dbReference>
<dbReference type="Gene3D" id="3.40.50.720">
    <property type="entry name" value="NAD(P)-binding Rossmann-like Domain"/>
    <property type="match status" value="1"/>
</dbReference>
<dbReference type="HAMAP" id="MF_00394">
    <property type="entry name" value="NAD_Glyc3P_dehydrog"/>
    <property type="match status" value="1"/>
</dbReference>
<dbReference type="InterPro" id="IPR008927">
    <property type="entry name" value="6-PGluconate_DH-like_C_sf"/>
</dbReference>
<dbReference type="InterPro" id="IPR013328">
    <property type="entry name" value="6PGD_dom2"/>
</dbReference>
<dbReference type="InterPro" id="IPR006168">
    <property type="entry name" value="G3P_DH_NAD-dep"/>
</dbReference>
<dbReference type="InterPro" id="IPR006109">
    <property type="entry name" value="G3P_DH_NAD-dep_C"/>
</dbReference>
<dbReference type="InterPro" id="IPR011128">
    <property type="entry name" value="G3P_DH_NAD-dep_N"/>
</dbReference>
<dbReference type="InterPro" id="IPR036291">
    <property type="entry name" value="NAD(P)-bd_dom_sf"/>
</dbReference>
<dbReference type="NCBIfam" id="NF000940">
    <property type="entry name" value="PRK00094.1-2"/>
    <property type="match status" value="1"/>
</dbReference>
<dbReference type="NCBIfam" id="NF000942">
    <property type="entry name" value="PRK00094.1-4"/>
    <property type="match status" value="1"/>
</dbReference>
<dbReference type="PANTHER" id="PTHR11728">
    <property type="entry name" value="GLYCEROL-3-PHOSPHATE DEHYDROGENASE"/>
    <property type="match status" value="1"/>
</dbReference>
<dbReference type="PANTHER" id="PTHR11728:SF1">
    <property type="entry name" value="GLYCEROL-3-PHOSPHATE DEHYDROGENASE [NAD(+)] 2, CHLOROPLASTIC"/>
    <property type="match status" value="1"/>
</dbReference>
<dbReference type="Pfam" id="PF07479">
    <property type="entry name" value="NAD_Gly3P_dh_C"/>
    <property type="match status" value="1"/>
</dbReference>
<dbReference type="Pfam" id="PF01210">
    <property type="entry name" value="NAD_Gly3P_dh_N"/>
    <property type="match status" value="1"/>
</dbReference>
<dbReference type="PIRSF" id="PIRSF000114">
    <property type="entry name" value="Glycerol-3-P_dh"/>
    <property type="match status" value="1"/>
</dbReference>
<dbReference type="PRINTS" id="PR00077">
    <property type="entry name" value="GPDHDRGNASE"/>
</dbReference>
<dbReference type="SUPFAM" id="SSF48179">
    <property type="entry name" value="6-phosphogluconate dehydrogenase C-terminal domain-like"/>
    <property type="match status" value="1"/>
</dbReference>
<dbReference type="SUPFAM" id="SSF51735">
    <property type="entry name" value="NAD(P)-binding Rossmann-fold domains"/>
    <property type="match status" value="1"/>
</dbReference>
<dbReference type="PROSITE" id="PS00957">
    <property type="entry name" value="NAD_G3PDH"/>
    <property type="match status" value="1"/>
</dbReference>
<feature type="chain" id="PRO_1000190124" description="Glycerol-3-phosphate dehydrogenase [NAD(P)+]">
    <location>
        <begin position="1"/>
        <end position="326"/>
    </location>
</feature>
<feature type="active site" description="Proton acceptor" evidence="1">
    <location>
        <position position="190"/>
    </location>
</feature>
<feature type="binding site" evidence="1">
    <location>
        <position position="13"/>
    </location>
    <ligand>
        <name>NADPH</name>
        <dbReference type="ChEBI" id="CHEBI:57783"/>
    </ligand>
</feature>
<feature type="binding site" evidence="1">
    <location>
        <position position="33"/>
    </location>
    <ligand>
        <name>NADPH</name>
        <dbReference type="ChEBI" id="CHEBI:57783"/>
    </ligand>
</feature>
<feature type="binding site" evidence="1">
    <location>
        <position position="107"/>
    </location>
    <ligand>
        <name>NADPH</name>
        <dbReference type="ChEBI" id="CHEBI:57783"/>
    </ligand>
</feature>
<feature type="binding site" evidence="1">
    <location>
        <position position="107"/>
    </location>
    <ligand>
        <name>sn-glycerol 3-phosphate</name>
        <dbReference type="ChEBI" id="CHEBI:57597"/>
    </ligand>
</feature>
<feature type="binding site" evidence="1">
    <location>
        <position position="135"/>
    </location>
    <ligand>
        <name>sn-glycerol 3-phosphate</name>
        <dbReference type="ChEBI" id="CHEBI:57597"/>
    </ligand>
</feature>
<feature type="binding site" evidence="1">
    <location>
        <position position="137"/>
    </location>
    <ligand>
        <name>sn-glycerol 3-phosphate</name>
        <dbReference type="ChEBI" id="CHEBI:57597"/>
    </ligand>
</feature>
<feature type="binding site" evidence="1">
    <location>
        <position position="139"/>
    </location>
    <ligand>
        <name>NADPH</name>
        <dbReference type="ChEBI" id="CHEBI:57783"/>
    </ligand>
</feature>
<feature type="binding site" evidence="1">
    <location>
        <position position="190"/>
    </location>
    <ligand>
        <name>sn-glycerol 3-phosphate</name>
        <dbReference type="ChEBI" id="CHEBI:57597"/>
    </ligand>
</feature>
<feature type="binding site" evidence="1">
    <location>
        <position position="243"/>
    </location>
    <ligand>
        <name>sn-glycerol 3-phosphate</name>
        <dbReference type="ChEBI" id="CHEBI:57597"/>
    </ligand>
</feature>
<feature type="binding site" evidence="1">
    <location>
        <position position="253"/>
    </location>
    <ligand>
        <name>sn-glycerol 3-phosphate</name>
        <dbReference type="ChEBI" id="CHEBI:57597"/>
    </ligand>
</feature>
<feature type="binding site" evidence="1">
    <location>
        <position position="254"/>
    </location>
    <ligand>
        <name>NADPH</name>
        <dbReference type="ChEBI" id="CHEBI:57783"/>
    </ligand>
</feature>
<feature type="binding site" evidence="1">
    <location>
        <position position="254"/>
    </location>
    <ligand>
        <name>sn-glycerol 3-phosphate</name>
        <dbReference type="ChEBI" id="CHEBI:57597"/>
    </ligand>
</feature>
<feature type="binding site" evidence="1">
    <location>
        <position position="255"/>
    </location>
    <ligand>
        <name>sn-glycerol 3-phosphate</name>
        <dbReference type="ChEBI" id="CHEBI:57597"/>
    </ligand>
</feature>
<feature type="binding site" evidence="1">
    <location>
        <position position="273"/>
    </location>
    <ligand>
        <name>NADPH</name>
        <dbReference type="ChEBI" id="CHEBI:57783"/>
    </ligand>
</feature>
<feature type="binding site" evidence="1">
    <location>
        <position position="275"/>
    </location>
    <ligand>
        <name>NADPH</name>
        <dbReference type="ChEBI" id="CHEBI:57783"/>
    </ligand>
</feature>
<proteinExistence type="inferred from homology"/>
<accession>C0RFD3</accession>
<protein>
    <recommendedName>
        <fullName evidence="1">Glycerol-3-phosphate dehydrogenase [NAD(P)+]</fullName>
        <ecNumber evidence="1">1.1.1.94</ecNumber>
    </recommendedName>
    <alternativeName>
        <fullName evidence="1">NAD(P)(+)-dependent glycerol-3-phosphate dehydrogenase</fullName>
    </alternativeName>
    <alternativeName>
        <fullName evidence="1">NAD(P)H-dependent dihydroxyacetone-phosphate reductase</fullName>
    </alternativeName>
</protein>
<keyword id="KW-0963">Cytoplasm</keyword>
<keyword id="KW-0444">Lipid biosynthesis</keyword>
<keyword id="KW-0443">Lipid metabolism</keyword>
<keyword id="KW-0520">NAD</keyword>
<keyword id="KW-0521">NADP</keyword>
<keyword id="KW-0547">Nucleotide-binding</keyword>
<keyword id="KW-0560">Oxidoreductase</keyword>
<keyword id="KW-0594">Phospholipid biosynthesis</keyword>
<keyword id="KW-1208">Phospholipid metabolism</keyword>